<feature type="chain" id="PRO_1000146438" description="Small ribosomal subunit protein uS9">
    <location>
        <begin position="1"/>
        <end position="158"/>
    </location>
</feature>
<keyword id="KW-0687">Ribonucleoprotein</keyword>
<keyword id="KW-0689">Ribosomal protein</keyword>
<comment type="similarity">
    <text evidence="1">Belongs to the universal ribosomal protein uS9 family.</text>
</comment>
<gene>
    <name evidence="1" type="primary">rpsI</name>
    <name type="ordered locus">BMEA_A0828</name>
</gene>
<sequence>MVESINSLEELGTVAKTEAAAPVDVQKLDAQGRAYATGKRKDAVARVWVKPGTGKITVNDKEFEKYFARPVLQMILQQPIVASNRAGQFDIVATVAGGGLSGQAGAVRHGISKALTYYEPGLRTVLKKGGFLTRDSRVVERKKYGKAKARRSFQFSKR</sequence>
<name>RS9_BRUMB</name>
<protein>
    <recommendedName>
        <fullName evidence="1">Small ribosomal subunit protein uS9</fullName>
    </recommendedName>
    <alternativeName>
        <fullName evidence="2">30S ribosomal protein S9</fullName>
    </alternativeName>
</protein>
<dbReference type="EMBL" id="CP001488">
    <property type="protein sequence ID" value="ACO00583.1"/>
    <property type="molecule type" value="Genomic_DNA"/>
</dbReference>
<dbReference type="RefSeq" id="WP_004686488.1">
    <property type="nucleotide sequence ID" value="NC_012441.1"/>
</dbReference>
<dbReference type="SMR" id="C0RIC5"/>
<dbReference type="KEGG" id="bmi:BMEA_A0828"/>
<dbReference type="HOGENOM" id="CLU_046483_2_0_5"/>
<dbReference type="Proteomes" id="UP000001748">
    <property type="component" value="Chromosome I"/>
</dbReference>
<dbReference type="GO" id="GO:0022627">
    <property type="term" value="C:cytosolic small ribosomal subunit"/>
    <property type="evidence" value="ECO:0007669"/>
    <property type="project" value="TreeGrafter"/>
</dbReference>
<dbReference type="GO" id="GO:0003723">
    <property type="term" value="F:RNA binding"/>
    <property type="evidence" value="ECO:0007669"/>
    <property type="project" value="TreeGrafter"/>
</dbReference>
<dbReference type="GO" id="GO:0003735">
    <property type="term" value="F:structural constituent of ribosome"/>
    <property type="evidence" value="ECO:0007669"/>
    <property type="project" value="InterPro"/>
</dbReference>
<dbReference type="GO" id="GO:0006412">
    <property type="term" value="P:translation"/>
    <property type="evidence" value="ECO:0007669"/>
    <property type="project" value="UniProtKB-UniRule"/>
</dbReference>
<dbReference type="FunFam" id="3.30.230.10:FF:000034">
    <property type="entry name" value="30S ribosomal protein S9"/>
    <property type="match status" value="1"/>
</dbReference>
<dbReference type="Gene3D" id="3.30.230.10">
    <property type="match status" value="1"/>
</dbReference>
<dbReference type="HAMAP" id="MF_00532_B">
    <property type="entry name" value="Ribosomal_uS9_B"/>
    <property type="match status" value="1"/>
</dbReference>
<dbReference type="InterPro" id="IPR020568">
    <property type="entry name" value="Ribosomal_Su5_D2-typ_SF"/>
</dbReference>
<dbReference type="InterPro" id="IPR000754">
    <property type="entry name" value="Ribosomal_uS9"/>
</dbReference>
<dbReference type="InterPro" id="IPR023035">
    <property type="entry name" value="Ribosomal_uS9_bac/plastid"/>
</dbReference>
<dbReference type="InterPro" id="IPR020574">
    <property type="entry name" value="Ribosomal_uS9_CS"/>
</dbReference>
<dbReference type="InterPro" id="IPR014721">
    <property type="entry name" value="Ribsml_uS5_D2-typ_fold_subgr"/>
</dbReference>
<dbReference type="NCBIfam" id="NF001099">
    <property type="entry name" value="PRK00132.1"/>
    <property type="match status" value="1"/>
</dbReference>
<dbReference type="PANTHER" id="PTHR21569">
    <property type="entry name" value="RIBOSOMAL PROTEIN S9"/>
    <property type="match status" value="1"/>
</dbReference>
<dbReference type="PANTHER" id="PTHR21569:SF1">
    <property type="entry name" value="SMALL RIBOSOMAL SUBUNIT PROTEIN US9M"/>
    <property type="match status" value="1"/>
</dbReference>
<dbReference type="Pfam" id="PF00380">
    <property type="entry name" value="Ribosomal_S9"/>
    <property type="match status" value="1"/>
</dbReference>
<dbReference type="SUPFAM" id="SSF54211">
    <property type="entry name" value="Ribosomal protein S5 domain 2-like"/>
    <property type="match status" value="1"/>
</dbReference>
<dbReference type="PROSITE" id="PS00360">
    <property type="entry name" value="RIBOSOMAL_S9"/>
    <property type="match status" value="1"/>
</dbReference>
<reference key="1">
    <citation type="submission" date="2009-03" db="EMBL/GenBank/DDBJ databases">
        <title>Brucella melitensis ATCC 23457 whole genome shotgun sequencing project.</title>
        <authorList>
            <person name="Setubal J.C."/>
            <person name="Boyle S."/>
            <person name="Crasta O.R."/>
            <person name="Gillespie J.J."/>
            <person name="Kenyon R.W."/>
            <person name="Lu J."/>
            <person name="Mane S."/>
            <person name="Nagrani S."/>
            <person name="Shallom J.M."/>
            <person name="Shallom S."/>
            <person name="Shukla M."/>
            <person name="Snyder E.E."/>
            <person name="Sobral B.W."/>
            <person name="Wattam A.R."/>
            <person name="Will R."/>
            <person name="Williams K."/>
            <person name="Yoo H."/>
            <person name="Munk C."/>
            <person name="Tapia R."/>
            <person name="Han C."/>
            <person name="Detter J.C."/>
            <person name="Bruce D."/>
            <person name="Brettin T.S."/>
        </authorList>
    </citation>
    <scope>NUCLEOTIDE SEQUENCE [LARGE SCALE GENOMIC DNA]</scope>
    <source>
        <strain>ATCC 23457</strain>
    </source>
</reference>
<evidence type="ECO:0000255" key="1">
    <source>
        <dbReference type="HAMAP-Rule" id="MF_00532"/>
    </source>
</evidence>
<evidence type="ECO:0000305" key="2"/>
<proteinExistence type="inferred from homology"/>
<accession>C0RIC5</accession>
<organism>
    <name type="scientific">Brucella melitensis biotype 2 (strain ATCC 23457)</name>
    <dbReference type="NCBI Taxonomy" id="546272"/>
    <lineage>
        <taxon>Bacteria</taxon>
        <taxon>Pseudomonadati</taxon>
        <taxon>Pseudomonadota</taxon>
        <taxon>Alphaproteobacteria</taxon>
        <taxon>Hyphomicrobiales</taxon>
        <taxon>Brucellaceae</taxon>
        <taxon>Brucella/Ochrobactrum group</taxon>
        <taxon>Brucella</taxon>
    </lineage>
</organism>